<keyword id="KW-0903">Direct protein sequencing</keyword>
<keyword id="KW-0325">Glycoprotein</keyword>
<keyword id="KW-0372">Hormone</keyword>
<keyword id="KW-0379">Hydroxylation</keyword>
<keyword id="KW-0611">Plant defense</keyword>
<keyword id="KW-1185">Reference proteome</keyword>
<keyword id="KW-0964">Secreted</keyword>
<keyword id="KW-0732">Signal</keyword>
<name>HSY1_SOLLC</name>
<comment type="function">
    <text evidence="3">Activates a lipid-based signal transduction pathway in which linolenic acid is converted to jasmonic acid, a potent activator of defense gene transcription. Induces synthesis of proteinase inhibitors I and II in leaves when supplied through cut stems.</text>
</comment>
<comment type="subcellular location">
    <subcellularLocation>
        <location>Secreted</location>
    </subcellularLocation>
</comment>
<comment type="tissue specificity">
    <text evidence="3">Leaves.</text>
</comment>
<comment type="induction">
    <text evidence="3">By wounding and methyl jasmonate in leaves.</text>
</comment>
<comment type="PTM">
    <text evidence="3">O-glycosylated; contains pentose side chains.</text>
</comment>
<comment type="mass spectrometry" mass="4191.0" method="MALDI" evidence="3">
    <molecule>HypSys I</molecule>
</comment>
<comment type="mass spectrometry" mass="3531.0" method="MALDI" evidence="3">
    <molecule>HypSys I</molecule>
</comment>
<comment type="mass spectrometry" mass="2954.0" method="MALDI" evidence="3">
    <molecule>HypSys III</molecule>
</comment>
<comment type="mass spectrometry" mass="4513.0" method="MALDI" evidence="3 4">
    <molecule>HypSys II</molecule>
</comment>
<organism evidence="6">
    <name type="scientific">Solanum lycopersicum</name>
    <name type="common">Tomato</name>
    <name type="synonym">Lycopersicon esculentum</name>
    <dbReference type="NCBI Taxonomy" id="4081"/>
    <lineage>
        <taxon>Eukaryota</taxon>
        <taxon>Viridiplantae</taxon>
        <taxon>Streptophyta</taxon>
        <taxon>Embryophyta</taxon>
        <taxon>Tracheophyta</taxon>
        <taxon>Spermatophyta</taxon>
        <taxon>Magnoliopsida</taxon>
        <taxon>eudicotyledons</taxon>
        <taxon>Gunneridae</taxon>
        <taxon>Pentapetalae</taxon>
        <taxon>asterids</taxon>
        <taxon>lamiids</taxon>
        <taxon>Solanales</taxon>
        <taxon>Solanaceae</taxon>
        <taxon>Solanoideae</taxon>
        <taxon>Solaneae</taxon>
        <taxon>Solanum</taxon>
        <taxon>Solanum subgen. Lycopersicon</taxon>
    </lineage>
</organism>
<protein>
    <recommendedName>
        <fullName>Hydroxyproline-rich systemin</fullName>
    </recommendedName>
    <alternativeName>
        <fullName>Defense-signaling glycopeptide hormone</fullName>
    </alternativeName>
    <component>
        <recommendedName>
            <fullName>HypSys I</fullName>
        </recommendedName>
        <alternativeName>
            <fullName>TomHypSys I</fullName>
        </alternativeName>
    </component>
    <component>
        <recommendedName>
            <fullName>HypSys II</fullName>
        </recommendedName>
        <alternativeName>
            <fullName>TomHypSys II</fullName>
        </alternativeName>
    </component>
    <component>
        <recommendedName>
            <fullName>HypSys III</fullName>
        </recommendedName>
        <alternativeName>
            <fullName>TomHypSys III</fullName>
        </alternativeName>
    </component>
</protein>
<dbReference type="EMBL" id="AY292201">
    <property type="protein sequence ID" value="AAQ19087.1"/>
    <property type="molecule type" value="mRNA"/>
</dbReference>
<dbReference type="RefSeq" id="NP_001234375.1">
    <property type="nucleotide sequence ID" value="NM_001247446.2"/>
</dbReference>
<dbReference type="SMR" id="Q7XAD0"/>
<dbReference type="PaxDb" id="4081-Solyc06g068520.2.1"/>
<dbReference type="EnsemblPlants" id="Solyc06g068520.3.1">
    <property type="protein sequence ID" value="Solyc06g068520.3.1"/>
    <property type="gene ID" value="Solyc06g068520.3"/>
</dbReference>
<dbReference type="GeneID" id="543883"/>
<dbReference type="Gramene" id="Solyc06g068520.3.1">
    <property type="protein sequence ID" value="Solyc06g068520.3.1"/>
    <property type="gene ID" value="Solyc06g068520.3"/>
</dbReference>
<dbReference type="KEGG" id="sly:543883"/>
<dbReference type="eggNOG" id="ENOG502R5P7">
    <property type="taxonomic scope" value="Eukaryota"/>
</dbReference>
<dbReference type="HOGENOM" id="CLU_1985565_0_0_1"/>
<dbReference type="InParanoid" id="Q7XAD0"/>
<dbReference type="OMA" id="MRTKMIL"/>
<dbReference type="OrthoDB" id="1305637at2759"/>
<dbReference type="Proteomes" id="UP000004994">
    <property type="component" value="Chromosome 6"/>
</dbReference>
<dbReference type="GO" id="GO:0005576">
    <property type="term" value="C:extracellular region"/>
    <property type="evidence" value="ECO:0007669"/>
    <property type="project" value="UniProtKB-SubCell"/>
</dbReference>
<dbReference type="GO" id="GO:0005179">
    <property type="term" value="F:hormone activity"/>
    <property type="evidence" value="ECO:0007669"/>
    <property type="project" value="UniProtKB-KW"/>
</dbReference>
<dbReference type="GO" id="GO:0005102">
    <property type="term" value="F:signaling receptor binding"/>
    <property type="evidence" value="ECO:0000314"/>
    <property type="project" value="UniProtKB"/>
</dbReference>
<dbReference type="GO" id="GO:0006952">
    <property type="term" value="P:defense response"/>
    <property type="evidence" value="ECO:0000314"/>
    <property type="project" value="UniProtKB"/>
</dbReference>
<sequence length="146" mass="16012">MISFFRAFFLIIIISFLIFVGAQARTLLGNYHDDEMLIELKLESGNYGRTPYKTPPPPTSSSPTHQEIVNGRHDSVLPPPSPKTDPIIGQLTTITTTPHHDDTVAAPPVGGRHDYVASPPPPKPQDEQRQIIITSSSSTLPLQASY</sequence>
<accession>Q7XAD0</accession>
<proteinExistence type="evidence at protein level"/>
<reference evidence="5" key="1">
    <citation type="journal article" date="2003" name="J. Biol. Chem.">
        <title>Systemic signaling in tomato plants for defense against herbivores: isolation and characterization of three novel defense-signaling glycopeptide hormones coded in a single precursor gene.</title>
        <authorList>
            <person name="Pearce G."/>
            <person name="Ryan C.A."/>
        </authorList>
    </citation>
    <scope>NUCLEOTIDE SEQUENCE [MRNA]</scope>
    <scope>PROTEIN SEQUENCE OF 49-66; 71-85 AND 111-125</scope>
    <scope>FUNCTION</scope>
    <scope>TISSUE SPECIFICITY</scope>
    <scope>MASS SPECTROMETRY</scope>
    <scope>HYDROXYLATION AT PRO-51; PRO-55; PRO-56; PRO-57; PRO-58; PRO-63; PRO-79; PRO-80; PRO-82; PRO-119; PRO-120; PRO-121 AND PRO-122</scope>
    <scope>GLYCOSYLATION</scope>
    <source>
        <strain evidence="6">cv. Castlemart</strain>
    </source>
</reference>
<reference evidence="5" key="2">
    <citation type="journal article" date="2003" name="Proc. Natl. Acad. Sci. U.S.A.">
        <title>Systemins: a functionally defined family of peptide signals that regulate defensive genes in Solanaceae species.</title>
        <authorList>
            <person name="Ryan C.A."/>
            <person name="Pearce G."/>
        </authorList>
    </citation>
    <scope>REVIEW ON FUNCTION</scope>
</reference>
<evidence type="ECO:0000255" key="1"/>
<evidence type="ECO:0000256" key="2">
    <source>
        <dbReference type="SAM" id="MobiDB-lite"/>
    </source>
</evidence>
<evidence type="ECO:0000269" key="3">
    <source>
    </source>
</evidence>
<evidence type="ECO:0000303" key="4">
    <source>
    </source>
</evidence>
<evidence type="ECO:0000305" key="5"/>
<evidence type="ECO:0000312" key="6">
    <source>
        <dbReference type="EMBL" id="AAQ19087.1"/>
    </source>
</evidence>
<feature type="signal peptide" evidence="1">
    <location>
        <begin position="1"/>
        <end position="24"/>
    </location>
</feature>
<feature type="propeptide" id="PRO_0000021449" evidence="1 3">
    <location>
        <begin position="25"/>
        <end position="48"/>
    </location>
</feature>
<feature type="peptide" id="PRO_0000021450" description="HypSys I" evidence="3">
    <location>
        <begin position="49"/>
        <end position="66"/>
    </location>
</feature>
<feature type="propeptide" id="PRO_0000021451" evidence="3">
    <location>
        <begin position="67"/>
        <end position="70"/>
    </location>
</feature>
<feature type="peptide" id="PRO_0000021452" description="HypSys III" evidence="3">
    <location>
        <begin position="71"/>
        <end position="85"/>
    </location>
</feature>
<feature type="propeptide" id="PRO_0000021453" evidence="3">
    <location>
        <begin position="86"/>
        <end position="110"/>
    </location>
</feature>
<feature type="peptide" id="PRO_0000021454" description="HypSys II" evidence="3 4">
    <location>
        <begin position="111"/>
        <end position="130"/>
    </location>
</feature>
<feature type="propeptide" id="PRO_0000021455" evidence="4">
    <location>
        <begin position="131"/>
        <end position="146"/>
    </location>
</feature>
<feature type="region of interest" description="Disordered" evidence="2">
    <location>
        <begin position="47"/>
        <end position="128"/>
    </location>
</feature>
<feature type="modified residue" description="4-hydroxyproline" evidence="3">
    <location>
        <position position="51"/>
    </location>
</feature>
<feature type="modified residue" description="4-hydroxyproline" evidence="3">
    <location>
        <position position="55"/>
    </location>
</feature>
<feature type="modified residue" description="4-hydroxyproline" evidence="3">
    <location>
        <position position="56"/>
    </location>
</feature>
<feature type="modified residue" description="4-hydroxyproline">
    <location>
        <position position="57"/>
    </location>
</feature>
<feature type="modified residue" description="4-hydroxyproline" evidence="3">
    <location>
        <position position="58"/>
    </location>
</feature>
<feature type="modified residue" description="4-hydroxyproline" evidence="3">
    <location>
        <position position="63"/>
    </location>
</feature>
<feature type="modified residue" description="4-hydroxyproline" evidence="3">
    <location>
        <position position="79"/>
    </location>
</feature>
<feature type="modified residue" description="4-hydroxyproline" evidence="3">
    <location>
        <position position="80"/>
    </location>
</feature>
<feature type="modified residue" description="4-hydroxyproline" evidence="3">
    <location>
        <position position="82"/>
    </location>
</feature>
<feature type="modified residue" description="4-hydroxyproline" evidence="3">
    <location>
        <position position="119"/>
    </location>
</feature>
<feature type="modified residue" description="4-hydroxyproline" evidence="3">
    <location>
        <position position="120"/>
    </location>
</feature>
<feature type="modified residue" description="4-hydroxyproline" evidence="3">
    <location>
        <position position="121"/>
    </location>
</feature>
<feature type="modified residue" description="4-hydroxyproline" evidence="3">
    <location>
        <position position="122"/>
    </location>
</feature>
<feature type="glycosylation site" description="O-linked (Ara...) hydroxyproline" evidence="1">
    <location>
        <position position="51"/>
    </location>
</feature>
<feature type="glycosylation site" description="O-linked (Ara...) hydroxyproline" evidence="1">
    <location>
        <position position="55"/>
    </location>
</feature>
<feature type="glycosylation site" description="O-linked (Ara...) hydroxyproline" evidence="1">
    <location>
        <position position="56"/>
    </location>
</feature>
<feature type="glycosylation site" description="O-linked (Ara...) hydroxyproline" evidence="1">
    <location>
        <position position="57"/>
    </location>
</feature>
<feature type="glycosylation site" description="O-linked (Ara...) hydroxyproline" evidence="1">
    <location>
        <position position="58"/>
    </location>
</feature>
<feature type="glycosylation site" description="O-linked (Ara...) hydroxyproline" evidence="1">
    <location>
        <position position="63"/>
    </location>
</feature>
<feature type="glycosylation site" description="O-linked (Ara...) hydroxyproline" evidence="1">
    <location>
        <position position="79"/>
    </location>
</feature>
<feature type="glycosylation site" description="O-linked (Ara...) hydroxyproline" evidence="1">
    <location>
        <position position="80"/>
    </location>
</feature>
<feature type="glycosylation site" description="O-linked (Ara...) hydroxyproline" evidence="1">
    <location>
        <position position="82"/>
    </location>
</feature>
<feature type="glycosylation site" description="O-linked (Ara...) hydroxyproline" evidence="1">
    <location>
        <position position="119"/>
    </location>
</feature>
<feature type="glycosylation site" description="O-linked (Ara...) hydroxyproline" evidence="1">
    <location>
        <position position="120"/>
    </location>
</feature>
<feature type="glycosylation site" description="O-linked (Ara...) hydroxyproline" evidence="1">
    <location>
        <position position="121"/>
    </location>
</feature>
<feature type="glycosylation site" description="O-linked (Ara...) hydroxyproline" evidence="1">
    <location>
        <position position="122"/>
    </location>
</feature>